<reference key="1">
    <citation type="submission" date="2006-08" db="EMBL/GenBank/DDBJ databases">
        <title>Complete sequence of chromosome 1 of Shewanella sp. MR-7.</title>
        <authorList>
            <person name="Copeland A."/>
            <person name="Lucas S."/>
            <person name="Lapidus A."/>
            <person name="Barry K."/>
            <person name="Detter J.C."/>
            <person name="Glavina del Rio T."/>
            <person name="Hammon N."/>
            <person name="Israni S."/>
            <person name="Dalin E."/>
            <person name="Tice H."/>
            <person name="Pitluck S."/>
            <person name="Kiss H."/>
            <person name="Brettin T."/>
            <person name="Bruce D."/>
            <person name="Han C."/>
            <person name="Tapia R."/>
            <person name="Gilna P."/>
            <person name="Schmutz J."/>
            <person name="Larimer F."/>
            <person name="Land M."/>
            <person name="Hauser L."/>
            <person name="Kyrpides N."/>
            <person name="Mikhailova N."/>
            <person name="Nealson K."/>
            <person name="Konstantinidis K."/>
            <person name="Klappenbach J."/>
            <person name="Tiedje J."/>
            <person name="Richardson P."/>
        </authorList>
    </citation>
    <scope>NUCLEOTIDE SEQUENCE [LARGE SCALE GENOMIC DNA]</scope>
    <source>
        <strain>MR-7</strain>
    </source>
</reference>
<evidence type="ECO:0000255" key="1">
    <source>
        <dbReference type="HAMAP-Rule" id="MF_01961"/>
    </source>
</evidence>
<comment type="function">
    <text evidence="1">Bifunctional enzyme with both catalase and broad-spectrum peroxidase activity.</text>
</comment>
<comment type="catalytic activity">
    <reaction evidence="1">
        <text>H2O2 + AH2 = A + 2 H2O</text>
        <dbReference type="Rhea" id="RHEA:30275"/>
        <dbReference type="ChEBI" id="CHEBI:13193"/>
        <dbReference type="ChEBI" id="CHEBI:15377"/>
        <dbReference type="ChEBI" id="CHEBI:16240"/>
        <dbReference type="ChEBI" id="CHEBI:17499"/>
        <dbReference type="EC" id="1.11.1.21"/>
    </reaction>
</comment>
<comment type="catalytic activity">
    <reaction evidence="1">
        <text>2 H2O2 = O2 + 2 H2O</text>
        <dbReference type="Rhea" id="RHEA:20309"/>
        <dbReference type="ChEBI" id="CHEBI:15377"/>
        <dbReference type="ChEBI" id="CHEBI:15379"/>
        <dbReference type="ChEBI" id="CHEBI:16240"/>
        <dbReference type="EC" id="1.11.1.21"/>
    </reaction>
</comment>
<comment type="cofactor">
    <cofactor evidence="1">
        <name>heme b</name>
        <dbReference type="ChEBI" id="CHEBI:60344"/>
    </cofactor>
    <text evidence="1">Binds 1 heme b (iron(II)-protoporphyrin IX) group per dimer.</text>
</comment>
<comment type="subunit">
    <text evidence="1">Homodimer or homotetramer.</text>
</comment>
<comment type="PTM">
    <text evidence="1">Formation of the three residue Trp-Tyr-Met cross-link is important for the catalase, but not the peroxidase activity of the enzyme.</text>
</comment>
<comment type="similarity">
    <text evidence="1">Belongs to the peroxidase family. Peroxidase/catalase subfamily.</text>
</comment>
<keyword id="KW-0349">Heme</keyword>
<keyword id="KW-0376">Hydrogen peroxide</keyword>
<keyword id="KW-0408">Iron</keyword>
<keyword id="KW-0479">Metal-binding</keyword>
<keyword id="KW-0560">Oxidoreductase</keyword>
<keyword id="KW-0575">Peroxidase</keyword>
<keyword id="KW-0732">Signal</keyword>
<sequence length="739" mass="81291">MKKSTIPTLSALTLAMSLAFGGSVIAQEQVTDNQFWWPEQLNLSPLRQNAVESNPYGSDYHYAEAFKSLDLDAVKKDIKALMTESQDWWPADYGHYGPFFIRMAWHSAGVYRIFDGRGGAAGGQQRFEPLNSWPDNVNLDKARRLLWPIKQKYGSKISWGDLMVLTGNVALESMGFKTFGFAGGRVDDWEAEQVNWGSEKAWLDSKRRNEKGELAKPMGATQMGLIYVNPEGPNGVPDPLASAKEIRDTFGRMAMNDEETVALIAGGHTFGKAHGAHDPSKCVGADPAASGVEAQGLGWKNKCGKGHSEDTVTSGLEGAWSSNPTKWTMEYLTWLYTFDWVQTKSPAGHIQWTPADDKAANLVPDAHLPDKRHAPMMFTSDIALKEDPIYREITTRFLKNPQEFELAFAKAWFKLTHRDMGPKARYLGADVPAEMLIWQDPIPALDHPVIDNADIKALGNKILASGLTVPELVRTAWASASSFRGTDMRGGANGARIRLEPMMNWQANNPKELAKVLAKLEKVQKDFNGSLKGGKKVSLADVIVLGGSVAVEKAAKEAGVTVSVPFTPGRMDATQAQTDVSSFAVLEPTADGFRNYYSKDSSHSPAEMLIERANMLNLTVPEMTVLVGGLRALGANSAGVKHGVFTDKPGTLSNDFFVNLLDMSTKWSKSEKQEGIYEGQDRKSGKLKWTATPVDLVFGSHSELRAVSEVYGAQDGQDRFVQDFIKAWNKVMNADRFDI</sequence>
<dbReference type="EC" id="1.11.1.21" evidence="1"/>
<dbReference type="EMBL" id="CP000444">
    <property type="protein sequence ID" value="ABI41577.1"/>
    <property type="molecule type" value="Genomic_DNA"/>
</dbReference>
<dbReference type="SMR" id="Q0HZ78"/>
<dbReference type="PeroxiBase" id="3612">
    <property type="entry name" value="SHspCP01_MR-7"/>
</dbReference>
<dbReference type="KEGG" id="shm:Shewmr7_0574"/>
<dbReference type="HOGENOM" id="CLU_025424_2_0_6"/>
<dbReference type="GO" id="GO:0005829">
    <property type="term" value="C:cytosol"/>
    <property type="evidence" value="ECO:0007669"/>
    <property type="project" value="TreeGrafter"/>
</dbReference>
<dbReference type="GO" id="GO:0004096">
    <property type="term" value="F:catalase activity"/>
    <property type="evidence" value="ECO:0007669"/>
    <property type="project" value="UniProtKB-UniRule"/>
</dbReference>
<dbReference type="GO" id="GO:0020037">
    <property type="term" value="F:heme binding"/>
    <property type="evidence" value="ECO:0007669"/>
    <property type="project" value="InterPro"/>
</dbReference>
<dbReference type="GO" id="GO:0046872">
    <property type="term" value="F:metal ion binding"/>
    <property type="evidence" value="ECO:0007669"/>
    <property type="project" value="UniProtKB-KW"/>
</dbReference>
<dbReference type="GO" id="GO:0070301">
    <property type="term" value="P:cellular response to hydrogen peroxide"/>
    <property type="evidence" value="ECO:0007669"/>
    <property type="project" value="TreeGrafter"/>
</dbReference>
<dbReference type="GO" id="GO:0042744">
    <property type="term" value="P:hydrogen peroxide catabolic process"/>
    <property type="evidence" value="ECO:0007669"/>
    <property type="project" value="UniProtKB-KW"/>
</dbReference>
<dbReference type="CDD" id="cd00649">
    <property type="entry name" value="catalase_peroxidase_1"/>
    <property type="match status" value="1"/>
</dbReference>
<dbReference type="CDD" id="cd08200">
    <property type="entry name" value="catalase_peroxidase_2"/>
    <property type="match status" value="1"/>
</dbReference>
<dbReference type="FunFam" id="1.10.420.10:FF:000004">
    <property type="entry name" value="Catalase-peroxidase"/>
    <property type="match status" value="1"/>
</dbReference>
<dbReference type="FunFam" id="1.10.520.10:FF:000002">
    <property type="entry name" value="Catalase-peroxidase"/>
    <property type="match status" value="1"/>
</dbReference>
<dbReference type="Gene3D" id="1.10.520.10">
    <property type="match status" value="2"/>
</dbReference>
<dbReference type="Gene3D" id="1.10.420.10">
    <property type="entry name" value="Peroxidase, domain 2"/>
    <property type="match status" value="2"/>
</dbReference>
<dbReference type="HAMAP" id="MF_01961">
    <property type="entry name" value="Catal_peroxid"/>
    <property type="match status" value="1"/>
</dbReference>
<dbReference type="InterPro" id="IPR000763">
    <property type="entry name" value="Catalase_peroxidase"/>
</dbReference>
<dbReference type="InterPro" id="IPR002016">
    <property type="entry name" value="Haem_peroxidase"/>
</dbReference>
<dbReference type="InterPro" id="IPR010255">
    <property type="entry name" value="Haem_peroxidase_sf"/>
</dbReference>
<dbReference type="InterPro" id="IPR019794">
    <property type="entry name" value="Peroxidases_AS"/>
</dbReference>
<dbReference type="InterPro" id="IPR019793">
    <property type="entry name" value="Peroxidases_heam-ligand_BS"/>
</dbReference>
<dbReference type="NCBIfam" id="TIGR00198">
    <property type="entry name" value="cat_per_HPI"/>
    <property type="match status" value="1"/>
</dbReference>
<dbReference type="NCBIfam" id="NF011635">
    <property type="entry name" value="PRK15061.1"/>
    <property type="match status" value="1"/>
</dbReference>
<dbReference type="PANTHER" id="PTHR30555:SF0">
    <property type="entry name" value="CATALASE-PEROXIDASE"/>
    <property type="match status" value="1"/>
</dbReference>
<dbReference type="PANTHER" id="PTHR30555">
    <property type="entry name" value="HYDROPEROXIDASE I, BIFUNCTIONAL CATALASE-PEROXIDASE"/>
    <property type="match status" value="1"/>
</dbReference>
<dbReference type="Pfam" id="PF00141">
    <property type="entry name" value="peroxidase"/>
    <property type="match status" value="2"/>
</dbReference>
<dbReference type="PRINTS" id="PR00460">
    <property type="entry name" value="BPEROXIDASE"/>
</dbReference>
<dbReference type="PRINTS" id="PR00458">
    <property type="entry name" value="PEROXIDASE"/>
</dbReference>
<dbReference type="SUPFAM" id="SSF48113">
    <property type="entry name" value="Heme-dependent peroxidases"/>
    <property type="match status" value="2"/>
</dbReference>
<dbReference type="PROSITE" id="PS00435">
    <property type="entry name" value="PEROXIDASE_1"/>
    <property type="match status" value="1"/>
</dbReference>
<dbReference type="PROSITE" id="PS00436">
    <property type="entry name" value="PEROXIDASE_2"/>
    <property type="match status" value="1"/>
</dbReference>
<dbReference type="PROSITE" id="PS50873">
    <property type="entry name" value="PEROXIDASE_4"/>
    <property type="match status" value="1"/>
</dbReference>
<protein>
    <recommendedName>
        <fullName evidence="1">Catalase-peroxidase 2</fullName>
        <shortName evidence="1">CP 2</shortName>
        <ecNumber evidence="1">1.11.1.21</ecNumber>
    </recommendedName>
    <alternativeName>
        <fullName evidence="1">Peroxidase/catalase 2</fullName>
    </alternativeName>
</protein>
<organism>
    <name type="scientific">Shewanella sp. (strain MR-7)</name>
    <dbReference type="NCBI Taxonomy" id="60481"/>
    <lineage>
        <taxon>Bacteria</taxon>
        <taxon>Pseudomonadati</taxon>
        <taxon>Pseudomonadota</taxon>
        <taxon>Gammaproteobacteria</taxon>
        <taxon>Alteromonadales</taxon>
        <taxon>Shewanellaceae</taxon>
        <taxon>Shewanella</taxon>
    </lineage>
</organism>
<name>KATG2_SHESR</name>
<accession>Q0HZ78</accession>
<gene>
    <name evidence="1" type="primary">katG2</name>
    <name type="ordered locus">Shewmr7_0574</name>
</gene>
<proteinExistence type="inferred from homology"/>
<feature type="signal peptide" evidence="1">
    <location>
        <begin position="1"/>
        <end position="26"/>
    </location>
</feature>
<feature type="chain" id="PRO_5000128535" description="Catalase-peroxidase 2">
    <location>
        <begin position="27"/>
        <end position="739"/>
    </location>
</feature>
<feature type="active site" description="Proton acceptor" evidence="1">
    <location>
        <position position="106"/>
    </location>
</feature>
<feature type="binding site" description="axial binding residue" evidence="1">
    <location>
        <position position="268"/>
    </location>
    <ligand>
        <name>heme b</name>
        <dbReference type="ChEBI" id="CHEBI:60344"/>
    </ligand>
    <ligandPart>
        <name>Fe</name>
        <dbReference type="ChEBI" id="CHEBI:18248"/>
    </ligandPart>
</feature>
<feature type="site" description="Transition state stabilizer" evidence="1">
    <location>
        <position position="102"/>
    </location>
</feature>
<feature type="cross-link" description="Tryptophyl-tyrosyl-methioninium (Trp-Tyr) (with M-253)" evidence="1">
    <location>
        <begin position="105"/>
        <end position="227"/>
    </location>
</feature>
<feature type="cross-link" description="Tryptophyl-tyrosyl-methioninium (Tyr-Met) (with W-105)" evidence="1">
    <location>
        <begin position="227"/>
        <end position="253"/>
    </location>
</feature>